<keyword id="KW-0963">Cytoplasm</keyword>
<keyword id="KW-0539">Nucleus</keyword>
<keyword id="KW-1185">Reference proteome</keyword>
<keyword id="KW-0677">Repeat</keyword>
<comment type="function">
    <text evidence="4 5">Binds and presumably selects ubiquitin-conjugates for destruction. Prefers multiubiquitin chains rather than single ubiquitins, with a binding affinity for 'Lys-48'-linked ubiquitin chains. Acts as a ubiquitin receptor that associates with the 26S proteasomal docking subunit RPN10 for the indirect recognition of ubiquitinated substrates of ubiquitin/26S proteasome-mediated proteolysis (UPP).</text>
</comment>
<comment type="subunit">
    <text evidence="4 6">Interacts with 'Lys-48'-linked polyubiquitin chains via its UBA domain. Interacts with RPN10 and RPN13. Interacts with PEX2 and PEX12.</text>
</comment>
<comment type="interaction">
    <interactant intactId="EBI-6860633">
        <id>Q9SII9</id>
    </interactant>
    <interactant intactId="EBI-4470254">
        <id>Q9CA86</id>
        <label>PEX2</label>
    </interactant>
    <organismsDiffer>false</organismsDiffer>
    <experiments>3</experiments>
</comment>
<comment type="interaction">
    <interactant intactId="EBI-6860633">
        <id>Q9SII9</id>
    </interactant>
    <interactant intactId="EBI-25522172">
        <id>Q8RUC6</id>
        <label>RUB2</label>
    </interactant>
    <organismsDiffer>false</organismsDiffer>
    <experiments>3</experiments>
</comment>
<comment type="subcellular location">
    <subcellularLocation>
        <location evidence="6">Nucleus</location>
    </subcellularLocation>
    <subcellularLocation>
        <location evidence="6">Cytoplasm</location>
    </subcellularLocation>
</comment>
<comment type="tissue specificity">
    <text evidence="6">Ubiquitous with a strong expression level in inflorescence.</text>
</comment>
<organism>
    <name type="scientific">Arabidopsis thaliana</name>
    <name type="common">Mouse-ear cress</name>
    <dbReference type="NCBI Taxonomy" id="3702"/>
    <lineage>
        <taxon>Eukaryota</taxon>
        <taxon>Viridiplantae</taxon>
        <taxon>Streptophyta</taxon>
        <taxon>Embryophyta</taxon>
        <taxon>Tracheophyta</taxon>
        <taxon>Spermatophyta</taxon>
        <taxon>Magnoliopsida</taxon>
        <taxon>eudicotyledons</taxon>
        <taxon>Gunneridae</taxon>
        <taxon>Pentapetalae</taxon>
        <taxon>rosids</taxon>
        <taxon>malvids</taxon>
        <taxon>Brassicales</taxon>
        <taxon>Brassicaceae</taxon>
        <taxon>Camelineae</taxon>
        <taxon>Arabidopsis</taxon>
    </lineage>
</organism>
<dbReference type="EMBL" id="AC007127">
    <property type="protein sequence ID" value="AAD25137.2"/>
    <property type="molecule type" value="Genomic_DNA"/>
</dbReference>
<dbReference type="EMBL" id="CP002685">
    <property type="protein sequence ID" value="AEC06596.1"/>
    <property type="molecule type" value="Genomic_DNA"/>
</dbReference>
<dbReference type="EMBL" id="AF360159">
    <property type="protein sequence ID" value="AAK25869.1"/>
    <property type="molecule type" value="mRNA"/>
</dbReference>
<dbReference type="EMBL" id="AY042828">
    <property type="protein sequence ID" value="AAK68768.1"/>
    <property type="molecule type" value="mRNA"/>
</dbReference>
<dbReference type="EMBL" id="AY081450">
    <property type="protein sequence ID" value="AAM10012.1"/>
    <property type="molecule type" value="mRNA"/>
</dbReference>
<dbReference type="EMBL" id="AY113886">
    <property type="protein sequence ID" value="AAM44934.1"/>
    <property type="molecule type" value="mRNA"/>
</dbReference>
<dbReference type="EMBL" id="AK228616">
    <property type="protein sequence ID" value="BAF00527.1"/>
    <property type="molecule type" value="mRNA"/>
</dbReference>
<dbReference type="PIR" id="B84549">
    <property type="entry name" value="B84549"/>
</dbReference>
<dbReference type="RefSeq" id="NP_565407.1">
    <property type="nucleotide sequence ID" value="NM_127273.4"/>
</dbReference>
<dbReference type="SMR" id="Q9SII9"/>
<dbReference type="BioGRID" id="1581">
    <property type="interactions" value="4"/>
</dbReference>
<dbReference type="FunCoup" id="Q9SII9">
    <property type="interactions" value="4539"/>
</dbReference>
<dbReference type="IntAct" id="Q9SII9">
    <property type="interactions" value="4"/>
</dbReference>
<dbReference type="STRING" id="3702.Q9SII9"/>
<dbReference type="GlyGen" id="Q9SII9">
    <property type="glycosylation" value="1 site"/>
</dbReference>
<dbReference type="iPTMnet" id="Q9SII9"/>
<dbReference type="PaxDb" id="3702-AT2G17190.1"/>
<dbReference type="ProteomicsDB" id="222182"/>
<dbReference type="EnsemblPlants" id="AT2G17190.1">
    <property type="protein sequence ID" value="AT2G17190.1"/>
    <property type="gene ID" value="AT2G17190"/>
</dbReference>
<dbReference type="GeneID" id="816224"/>
<dbReference type="Gramene" id="AT2G17190.1">
    <property type="protein sequence ID" value="AT2G17190.1"/>
    <property type="gene ID" value="AT2G17190"/>
</dbReference>
<dbReference type="KEGG" id="ath:AT2G17190"/>
<dbReference type="Araport" id="AT2G17190"/>
<dbReference type="TAIR" id="AT2G17190">
    <property type="gene designation" value="DSK2A"/>
</dbReference>
<dbReference type="eggNOG" id="KOG0010">
    <property type="taxonomic scope" value="Eukaryota"/>
</dbReference>
<dbReference type="HOGENOM" id="CLU_024293_4_0_1"/>
<dbReference type="InParanoid" id="Q9SII9"/>
<dbReference type="OMA" id="EVRFQTQ"/>
<dbReference type="OrthoDB" id="267397at2759"/>
<dbReference type="PhylomeDB" id="Q9SII9"/>
<dbReference type="PRO" id="PR:Q9SII9"/>
<dbReference type="Proteomes" id="UP000006548">
    <property type="component" value="Chromosome 2"/>
</dbReference>
<dbReference type="ExpressionAtlas" id="Q9SII9">
    <property type="expression patterns" value="baseline and differential"/>
</dbReference>
<dbReference type="GO" id="GO:0005829">
    <property type="term" value="C:cytosol"/>
    <property type="evidence" value="ECO:0000314"/>
    <property type="project" value="TAIR"/>
</dbReference>
<dbReference type="GO" id="GO:0005739">
    <property type="term" value="C:mitochondrion"/>
    <property type="evidence" value="ECO:0007005"/>
    <property type="project" value="TAIR"/>
</dbReference>
<dbReference type="GO" id="GO:0005634">
    <property type="term" value="C:nucleus"/>
    <property type="evidence" value="ECO:0000314"/>
    <property type="project" value="TAIR"/>
</dbReference>
<dbReference type="GO" id="GO:0031593">
    <property type="term" value="F:polyubiquitin modification-dependent protein binding"/>
    <property type="evidence" value="ECO:0000314"/>
    <property type="project" value="UniProtKB"/>
</dbReference>
<dbReference type="CDD" id="cd14399">
    <property type="entry name" value="UBA_PLICs"/>
    <property type="match status" value="1"/>
</dbReference>
<dbReference type="CDD" id="cd16106">
    <property type="entry name" value="Ubl_Dsk2p_like"/>
    <property type="match status" value="1"/>
</dbReference>
<dbReference type="FunFam" id="1.10.260.100:FF:000005">
    <property type="entry name" value="Ubiquitin domain-containing protein DSK2b"/>
    <property type="match status" value="1"/>
</dbReference>
<dbReference type="FunFam" id="3.10.20.90:FF:000183">
    <property type="entry name" value="Ubiquitin domain-containing protein DSK2b"/>
    <property type="match status" value="1"/>
</dbReference>
<dbReference type="FunFam" id="1.10.8.10:FF:000079">
    <property type="entry name" value="Ubiquitin family protein"/>
    <property type="match status" value="1"/>
</dbReference>
<dbReference type="Gene3D" id="1.10.260.100">
    <property type="match status" value="1"/>
</dbReference>
<dbReference type="Gene3D" id="1.10.8.10">
    <property type="entry name" value="DNA helicase RuvA subunit, C-terminal domain"/>
    <property type="match status" value="1"/>
</dbReference>
<dbReference type="Gene3D" id="3.10.20.90">
    <property type="entry name" value="Phosphatidylinositol 3-kinase Catalytic Subunit, Chain A, domain 1"/>
    <property type="match status" value="1"/>
</dbReference>
<dbReference type="InterPro" id="IPR006636">
    <property type="entry name" value="STI1_HS-bd"/>
</dbReference>
<dbReference type="InterPro" id="IPR015940">
    <property type="entry name" value="UBA"/>
</dbReference>
<dbReference type="InterPro" id="IPR009060">
    <property type="entry name" value="UBA-like_sf"/>
</dbReference>
<dbReference type="InterPro" id="IPR015496">
    <property type="entry name" value="Ubiquilin"/>
</dbReference>
<dbReference type="InterPro" id="IPR000626">
    <property type="entry name" value="Ubiquitin-like_dom"/>
</dbReference>
<dbReference type="InterPro" id="IPR029071">
    <property type="entry name" value="Ubiquitin-like_domsf"/>
</dbReference>
<dbReference type="PANTHER" id="PTHR10677:SF3">
    <property type="entry name" value="FI07626P-RELATED"/>
    <property type="match status" value="1"/>
</dbReference>
<dbReference type="PANTHER" id="PTHR10677">
    <property type="entry name" value="UBIQUILIN"/>
    <property type="match status" value="1"/>
</dbReference>
<dbReference type="Pfam" id="PF00627">
    <property type="entry name" value="UBA"/>
    <property type="match status" value="1"/>
</dbReference>
<dbReference type="Pfam" id="PF00240">
    <property type="entry name" value="ubiquitin"/>
    <property type="match status" value="1"/>
</dbReference>
<dbReference type="Pfam" id="PF23195">
    <property type="entry name" value="UBQLN1"/>
    <property type="match status" value="2"/>
</dbReference>
<dbReference type="SMART" id="SM00727">
    <property type="entry name" value="STI1"/>
    <property type="match status" value="4"/>
</dbReference>
<dbReference type="SMART" id="SM00165">
    <property type="entry name" value="UBA"/>
    <property type="match status" value="1"/>
</dbReference>
<dbReference type="SMART" id="SM00213">
    <property type="entry name" value="UBQ"/>
    <property type="match status" value="1"/>
</dbReference>
<dbReference type="SUPFAM" id="SSF46934">
    <property type="entry name" value="UBA-like"/>
    <property type="match status" value="1"/>
</dbReference>
<dbReference type="SUPFAM" id="SSF54236">
    <property type="entry name" value="Ubiquitin-like"/>
    <property type="match status" value="1"/>
</dbReference>
<dbReference type="PROSITE" id="PS50030">
    <property type="entry name" value="UBA"/>
    <property type="match status" value="1"/>
</dbReference>
<dbReference type="PROSITE" id="PS50053">
    <property type="entry name" value="UBIQUITIN_2"/>
    <property type="match status" value="1"/>
</dbReference>
<accession>Q9SII9</accession>
<accession>Q9C5L7</accession>
<gene>
    <name type="primary">DSK2A</name>
    <name type="ordered locus">At2g17190</name>
    <name type="ORF">T23A1.5</name>
</gene>
<feature type="chain" id="PRO_0000423179" description="Ubiquitin domain-containing protein DSK2a">
    <location>
        <begin position="1"/>
        <end position="538"/>
    </location>
</feature>
<feature type="domain" description="Ubiquitin-like" evidence="2">
    <location>
        <begin position="18"/>
        <end position="93"/>
    </location>
</feature>
<feature type="domain" description="STI1 1">
    <location>
        <begin position="138"/>
        <end position="179"/>
    </location>
</feature>
<feature type="domain" description="STI1 2">
    <location>
        <begin position="192"/>
        <end position="231"/>
    </location>
</feature>
<feature type="domain" description="STI1 3">
    <location>
        <begin position="357"/>
        <end position="394"/>
    </location>
</feature>
<feature type="domain" description="STI1 4">
    <location>
        <begin position="398"/>
        <end position="433"/>
    </location>
</feature>
<feature type="domain" description="UBA" evidence="1">
    <location>
        <begin position="491"/>
        <end position="535"/>
    </location>
</feature>
<feature type="region of interest" description="Disordered" evidence="3">
    <location>
        <begin position="95"/>
        <end position="120"/>
    </location>
</feature>
<feature type="region of interest" description="Disordered" evidence="3">
    <location>
        <begin position="289"/>
        <end position="316"/>
    </location>
</feature>
<feature type="compositionally biased region" description="Polar residues" evidence="3">
    <location>
        <begin position="102"/>
        <end position="119"/>
    </location>
</feature>
<feature type="mutagenesis site" description="Abolishes interaction with RPN13." evidence="4">
    <original>I</original>
    <variation>A</variation>
    <location>
        <position position="61"/>
    </location>
</feature>
<proteinExistence type="evidence at protein level"/>
<name>DSK2A_ARATH</name>
<reference key="1">
    <citation type="journal article" date="1999" name="Nature">
        <title>Sequence and analysis of chromosome 2 of the plant Arabidopsis thaliana.</title>
        <authorList>
            <person name="Lin X."/>
            <person name="Kaul S."/>
            <person name="Rounsley S.D."/>
            <person name="Shea T.P."/>
            <person name="Benito M.-I."/>
            <person name="Town C.D."/>
            <person name="Fujii C.Y."/>
            <person name="Mason T.M."/>
            <person name="Bowman C.L."/>
            <person name="Barnstead M.E."/>
            <person name="Feldblyum T.V."/>
            <person name="Buell C.R."/>
            <person name="Ketchum K.A."/>
            <person name="Lee J.J."/>
            <person name="Ronning C.M."/>
            <person name="Koo H.L."/>
            <person name="Moffat K.S."/>
            <person name="Cronin L.A."/>
            <person name="Shen M."/>
            <person name="Pai G."/>
            <person name="Van Aken S."/>
            <person name="Umayam L."/>
            <person name="Tallon L.J."/>
            <person name="Gill J.E."/>
            <person name="Adams M.D."/>
            <person name="Carrera A.J."/>
            <person name="Creasy T.H."/>
            <person name="Goodman H.M."/>
            <person name="Somerville C.R."/>
            <person name="Copenhaver G.P."/>
            <person name="Preuss D."/>
            <person name="Nierman W.C."/>
            <person name="White O."/>
            <person name="Eisen J.A."/>
            <person name="Salzberg S.L."/>
            <person name="Fraser C.M."/>
            <person name="Venter J.C."/>
        </authorList>
    </citation>
    <scope>NUCLEOTIDE SEQUENCE [LARGE SCALE GENOMIC DNA]</scope>
    <source>
        <strain>cv. Columbia</strain>
    </source>
</reference>
<reference key="2">
    <citation type="journal article" date="2017" name="Plant J.">
        <title>Araport11: a complete reannotation of the Arabidopsis thaliana reference genome.</title>
        <authorList>
            <person name="Cheng C.Y."/>
            <person name="Krishnakumar V."/>
            <person name="Chan A.P."/>
            <person name="Thibaud-Nissen F."/>
            <person name="Schobel S."/>
            <person name="Town C.D."/>
        </authorList>
    </citation>
    <scope>GENOME REANNOTATION</scope>
    <source>
        <strain>cv. Columbia</strain>
    </source>
</reference>
<reference key="3">
    <citation type="journal article" date="2003" name="Science">
        <title>Empirical analysis of transcriptional activity in the Arabidopsis genome.</title>
        <authorList>
            <person name="Yamada K."/>
            <person name="Lim J."/>
            <person name="Dale J.M."/>
            <person name="Chen H."/>
            <person name="Shinn P."/>
            <person name="Palm C.J."/>
            <person name="Southwick A.M."/>
            <person name="Wu H.C."/>
            <person name="Kim C.J."/>
            <person name="Nguyen M."/>
            <person name="Pham P.K."/>
            <person name="Cheuk R.F."/>
            <person name="Karlin-Newmann G."/>
            <person name="Liu S.X."/>
            <person name="Lam B."/>
            <person name="Sakano H."/>
            <person name="Wu T."/>
            <person name="Yu G."/>
            <person name="Miranda M."/>
            <person name="Quach H.L."/>
            <person name="Tripp M."/>
            <person name="Chang C.H."/>
            <person name="Lee J.M."/>
            <person name="Toriumi M.J."/>
            <person name="Chan M.M."/>
            <person name="Tang C.C."/>
            <person name="Onodera C.S."/>
            <person name="Deng J.M."/>
            <person name="Akiyama K."/>
            <person name="Ansari Y."/>
            <person name="Arakawa T."/>
            <person name="Banh J."/>
            <person name="Banno F."/>
            <person name="Bowser L."/>
            <person name="Brooks S.Y."/>
            <person name="Carninci P."/>
            <person name="Chao Q."/>
            <person name="Choy N."/>
            <person name="Enju A."/>
            <person name="Goldsmith A.D."/>
            <person name="Gurjal M."/>
            <person name="Hansen N.F."/>
            <person name="Hayashizaki Y."/>
            <person name="Johnson-Hopson C."/>
            <person name="Hsuan V.W."/>
            <person name="Iida K."/>
            <person name="Karnes M."/>
            <person name="Khan S."/>
            <person name="Koesema E."/>
            <person name="Ishida J."/>
            <person name="Jiang P.X."/>
            <person name="Jones T."/>
            <person name="Kawai J."/>
            <person name="Kamiya A."/>
            <person name="Meyers C."/>
            <person name="Nakajima M."/>
            <person name="Narusaka M."/>
            <person name="Seki M."/>
            <person name="Sakurai T."/>
            <person name="Satou M."/>
            <person name="Tamse R."/>
            <person name="Vaysberg M."/>
            <person name="Wallender E.K."/>
            <person name="Wong C."/>
            <person name="Yamamura Y."/>
            <person name="Yuan S."/>
            <person name="Shinozaki K."/>
            <person name="Davis R.W."/>
            <person name="Theologis A."/>
            <person name="Ecker J.R."/>
        </authorList>
    </citation>
    <scope>NUCLEOTIDE SEQUENCE [LARGE SCALE MRNA]</scope>
    <source>
        <strain>cv. Columbia</strain>
    </source>
</reference>
<reference key="4">
    <citation type="submission" date="2006-07" db="EMBL/GenBank/DDBJ databases">
        <title>Large-scale analysis of RIKEN Arabidopsis full-length (RAFL) cDNAs.</title>
        <authorList>
            <person name="Totoki Y."/>
            <person name="Seki M."/>
            <person name="Ishida J."/>
            <person name="Nakajima M."/>
            <person name="Enju A."/>
            <person name="Kamiya A."/>
            <person name="Narusaka M."/>
            <person name="Shin-i T."/>
            <person name="Nakagawa M."/>
            <person name="Sakamoto N."/>
            <person name="Oishi K."/>
            <person name="Kohara Y."/>
            <person name="Kobayashi M."/>
            <person name="Toyoda A."/>
            <person name="Sakaki Y."/>
            <person name="Sakurai T."/>
            <person name="Iida K."/>
            <person name="Akiyama K."/>
            <person name="Satou M."/>
            <person name="Toyoda T."/>
            <person name="Konagaya A."/>
            <person name="Carninci P."/>
            <person name="Kawai J."/>
            <person name="Hayashizaki Y."/>
            <person name="Shinozaki K."/>
        </authorList>
    </citation>
    <scope>NUCLEOTIDE SEQUENCE [LARGE SCALE MRNA]</scope>
    <source>
        <strain>cv. Columbia</strain>
    </source>
</reference>
<reference key="5">
    <citation type="journal article" date="2010" name="FEBS J.">
        <title>Cross-species divergence of the major recognition pathways of ubiquitylated substrates for ubiquitin/26S proteasome-mediated proteolysis.</title>
        <authorList>
            <person name="Fatimababy A.S."/>
            <person name="Lin Y.L."/>
            <person name="Usharani R."/>
            <person name="Radjacommare R."/>
            <person name="Wang H.T."/>
            <person name="Tsai H.L."/>
            <person name="Lee Y."/>
            <person name="Fu H."/>
        </authorList>
    </citation>
    <scope>FUNCTION</scope>
    <scope>INTERACTION WITH RPN10 AND RPN13</scope>
    <scope>MUTAGENESIS OF ILE-61</scope>
</reference>
<reference key="6">
    <citation type="journal article" date="2010" name="Trends Plant Sci.">
        <title>Proteasomal recognition of ubiquitylated substrates.</title>
        <authorList>
            <person name="Fu H."/>
            <person name="Lin Y.L."/>
            <person name="Fatimababy A.S."/>
        </authorList>
    </citation>
    <scope>REVIEW</scope>
</reference>
<reference key="7">
    <citation type="journal article" date="2011" name="Plant Cell">
        <title>The defective proteasome but not substrate recognition function is responsible for the null phenotypes of the Arabidopsis proteasome subunit RPN10.</title>
        <authorList>
            <person name="Lin Y.-L."/>
            <person name="Sung S.-C."/>
            <person name="Tsai H.-L."/>
            <person name="Yu T.-T."/>
            <person name="Radjacommare R."/>
            <person name="Usharani R."/>
            <person name="Fatimababy A.S."/>
            <person name="Lin H.-Y."/>
            <person name="Wang Y.-Y."/>
            <person name="Fu H."/>
        </authorList>
    </citation>
    <scope>FUNCTION</scope>
    <scope>POLYUBIQUITIN BINDING</scope>
</reference>
<reference key="8">
    <citation type="journal article" date="2013" name="J. Integr. Plant Biol.">
        <title>Arabidopsis RING peroxins are E3 ubiquitin ligases that interact with two homologous ubiquitin receptor proteins(F).</title>
        <authorList>
            <person name="Kaur N."/>
            <person name="Zhao Q."/>
            <person name="Xie Q."/>
            <person name="Hu J."/>
        </authorList>
    </citation>
    <scope>INTERACTION WITH PEX2 AND PEX12</scope>
    <scope>SUBCELLULAR LOCATION</scope>
    <scope>TISSUE SPECIFICITY</scope>
</reference>
<sequence>MGGEADSRQPLTAEGVAVAVNVRCSNGTKFSVTTSLDSTVESFKELIAQNSDVPANQQRLIYKGRILKDDQTLLSYGLQADHTVHMVRGFVPSSPSAPAANAGNQTTAPQAVGSNDSSNLGGGESLFPGLGFNPLGGGNAMAGLFGSGLPDLEQAQQQLAQNPNMIREMMNTPAIQNLMNNPEFMRSMIMNNPQMRELVDRNPELGHVLNDPSILRQTLEAARNPELMREMMRNTDRAMSNIESMPEGFNMLRRMYENVQEPLMNATTMSENAGNNTSSNPFAALLGNQGVTTQGSDTSNNISAPNAETGTPNANPLPNPWGATAGQTTAPGRTNAGLGGLGGLGGLGGLGMLGADSPLGATPDASQLSQILQNPAMSQMMQSVLSNPQYMNQLMSLNPQLRSMLDMNPQLREMMQNPDFLRQFSSPEMMQQMMSLQQSLFSQNRNTAGQDPTQTGAATGTANNGGLDLLMNMFGSLGAGGLSGTNQPNVPPEERFATQLQQLQEMGFYDRAENIRALLATNGNVNAAVERLLGSIGQ</sequence>
<evidence type="ECO:0000255" key="1">
    <source>
        <dbReference type="PROSITE-ProRule" id="PRU00212"/>
    </source>
</evidence>
<evidence type="ECO:0000255" key="2">
    <source>
        <dbReference type="PROSITE-ProRule" id="PRU00214"/>
    </source>
</evidence>
<evidence type="ECO:0000256" key="3">
    <source>
        <dbReference type="SAM" id="MobiDB-lite"/>
    </source>
</evidence>
<evidence type="ECO:0000269" key="4">
    <source>
    </source>
</evidence>
<evidence type="ECO:0000269" key="5">
    <source>
    </source>
</evidence>
<evidence type="ECO:0000269" key="6">
    <source>
    </source>
</evidence>
<protein>
    <recommendedName>
        <fullName>Ubiquitin domain-containing protein DSK2a</fullName>
    </recommendedName>
</protein>